<dbReference type="EMBL" id="X05297">
    <property type="protein sequence ID" value="CAA28917.1"/>
    <property type="molecule type" value="mRNA"/>
</dbReference>
<dbReference type="PIR" id="S07148">
    <property type="entry name" value="PWDGB"/>
</dbReference>
<dbReference type="SMR" id="P06583"/>
<dbReference type="FunCoup" id="P06583">
    <property type="interactions" value="578"/>
</dbReference>
<dbReference type="STRING" id="9615.ENSCAFP00000022476"/>
<dbReference type="GlyCosmos" id="P06583">
    <property type="glycosylation" value="3 sites, No reported glycans"/>
</dbReference>
<dbReference type="iPTMnet" id="P06583"/>
<dbReference type="PaxDb" id="9612-ENSCAFP00000022476"/>
<dbReference type="eggNOG" id="KOG3927">
    <property type="taxonomic scope" value="Eukaryota"/>
</dbReference>
<dbReference type="InParanoid" id="P06583"/>
<dbReference type="OrthoDB" id="5912413at2759"/>
<dbReference type="Proteomes" id="UP000002254">
    <property type="component" value="Unplaced"/>
</dbReference>
<dbReference type="Proteomes" id="UP000694429">
    <property type="component" value="Unplaced"/>
</dbReference>
<dbReference type="Proteomes" id="UP000694542">
    <property type="component" value="Unplaced"/>
</dbReference>
<dbReference type="Proteomes" id="UP000805418">
    <property type="component" value="Unplaced"/>
</dbReference>
<dbReference type="GO" id="GO:0016324">
    <property type="term" value="C:apical plasma membrane"/>
    <property type="evidence" value="ECO:0000250"/>
    <property type="project" value="UniProtKB"/>
</dbReference>
<dbReference type="GO" id="GO:0042383">
    <property type="term" value="C:sarcolemma"/>
    <property type="evidence" value="ECO:0007669"/>
    <property type="project" value="UniProtKB-SubCell"/>
</dbReference>
<dbReference type="GO" id="GO:0005890">
    <property type="term" value="C:sodium:potassium-exchanging ATPase complex"/>
    <property type="evidence" value="ECO:0000318"/>
    <property type="project" value="GO_Central"/>
</dbReference>
<dbReference type="GO" id="GO:0001671">
    <property type="term" value="F:ATPase activator activity"/>
    <property type="evidence" value="ECO:0000318"/>
    <property type="project" value="GO_Central"/>
</dbReference>
<dbReference type="GO" id="GO:0007155">
    <property type="term" value="P:cell adhesion"/>
    <property type="evidence" value="ECO:0007669"/>
    <property type="project" value="UniProtKB-KW"/>
</dbReference>
<dbReference type="GO" id="GO:0045087">
    <property type="term" value="P:innate immune response"/>
    <property type="evidence" value="ECO:0007669"/>
    <property type="project" value="UniProtKB-KW"/>
</dbReference>
<dbReference type="GO" id="GO:0030007">
    <property type="term" value="P:intracellular potassium ion homeostasis"/>
    <property type="evidence" value="ECO:0000318"/>
    <property type="project" value="GO_Central"/>
</dbReference>
<dbReference type="GO" id="GO:0006883">
    <property type="term" value="P:intracellular sodium ion homeostasis"/>
    <property type="evidence" value="ECO:0000318"/>
    <property type="project" value="GO_Central"/>
</dbReference>
<dbReference type="GO" id="GO:1990573">
    <property type="term" value="P:potassium ion import across plasma membrane"/>
    <property type="evidence" value="ECO:0000318"/>
    <property type="project" value="GO_Central"/>
</dbReference>
<dbReference type="GO" id="GO:0036376">
    <property type="term" value="P:sodium ion export across plasma membrane"/>
    <property type="evidence" value="ECO:0000318"/>
    <property type="project" value="GO_Central"/>
</dbReference>
<dbReference type="FunFam" id="1.20.5.170:FF:000062">
    <property type="entry name" value="Sodium/potassium-transporting ATPase subunit beta"/>
    <property type="match status" value="1"/>
</dbReference>
<dbReference type="FunFam" id="2.60.40.1660:FF:000002">
    <property type="entry name" value="Sodium/potassium-transporting ATPase subunit beta"/>
    <property type="match status" value="1"/>
</dbReference>
<dbReference type="Gene3D" id="1.20.5.170">
    <property type="match status" value="1"/>
</dbReference>
<dbReference type="Gene3D" id="2.60.40.1660">
    <property type="entry name" value="Na, k-atpase alpha subunit"/>
    <property type="match status" value="1"/>
</dbReference>
<dbReference type="InterPro" id="IPR000402">
    <property type="entry name" value="Na/K_ATPase_sub_beta"/>
</dbReference>
<dbReference type="InterPro" id="IPR038702">
    <property type="entry name" value="Na/K_ATPase_sub_beta_sf"/>
</dbReference>
<dbReference type="NCBIfam" id="TIGR01107">
    <property type="entry name" value="Na_K_ATPase_bet"/>
    <property type="match status" value="1"/>
</dbReference>
<dbReference type="PANTHER" id="PTHR11523">
    <property type="entry name" value="SODIUM/POTASSIUM-DEPENDENT ATPASE BETA SUBUNIT"/>
    <property type="match status" value="1"/>
</dbReference>
<dbReference type="PANTHER" id="PTHR11523:SF10">
    <property type="entry name" value="SODIUM_POTASSIUM-TRANSPORTING ATPASE SUBUNIT BETA-1"/>
    <property type="match status" value="1"/>
</dbReference>
<dbReference type="Pfam" id="PF00287">
    <property type="entry name" value="Na_K-ATPase"/>
    <property type="match status" value="1"/>
</dbReference>
<dbReference type="PROSITE" id="PS00390">
    <property type="entry name" value="ATPASE_NA_K_BETA_1"/>
    <property type="match status" value="1"/>
</dbReference>
<dbReference type="PROSITE" id="PS00391">
    <property type="entry name" value="ATPASE_NA_K_BETA_2"/>
    <property type="match status" value="1"/>
</dbReference>
<organism>
    <name type="scientific">Canis lupus familiaris</name>
    <name type="common">Dog</name>
    <name type="synonym">Canis familiaris</name>
    <dbReference type="NCBI Taxonomy" id="9615"/>
    <lineage>
        <taxon>Eukaryota</taxon>
        <taxon>Metazoa</taxon>
        <taxon>Chordata</taxon>
        <taxon>Craniata</taxon>
        <taxon>Vertebrata</taxon>
        <taxon>Euteleostomi</taxon>
        <taxon>Mammalia</taxon>
        <taxon>Eutheria</taxon>
        <taxon>Laurasiatheria</taxon>
        <taxon>Carnivora</taxon>
        <taxon>Caniformia</taxon>
        <taxon>Canidae</taxon>
        <taxon>Canis</taxon>
    </lineage>
</organism>
<reference key="1">
    <citation type="journal article" date="1987" name="Biochim. Biophys. Acta">
        <title>Molecular cloning and sequence analysis of the (Na+ + K+)-ATPase beta subunit from dog kidney.</title>
        <authorList>
            <person name="Brown T.A."/>
            <person name="Horowitz B."/>
            <person name="Miller R.P."/>
            <person name="McDonough A.A."/>
            <person name="Farley R.A."/>
        </authorList>
    </citation>
    <scope>NUCLEOTIDE SEQUENCE [MRNA]</scope>
    <scope>PARTIAL PROTEIN SEQUENCE</scope>
    <source>
        <tissue>Kidney</tissue>
    </source>
</reference>
<reference key="2">
    <citation type="journal article" date="1988" name="Biochim. Biophys. Acta">
        <title>All three potential N-glycosylation sites of the dog kidney (Na+ + K+)-ATPase beta-subunit contain oligosaccharide.</title>
        <authorList>
            <person name="Miller R.P."/>
            <person name="Farley R.A."/>
        </authorList>
    </citation>
    <scope>GLYCOSYLATION AT ASN-158; ASN-193 AND ASN-265</scope>
</reference>
<reference key="3">
    <citation type="journal article" date="2011" name="J. Biol. Chem.">
        <title>FXYD proteins reverse inhibition of the Na+-K+ pump mediated by glutathionylation of its beta1 subunit.</title>
        <authorList>
            <person name="Bibert S."/>
            <person name="Liu C.C."/>
            <person name="Figtree G.A."/>
            <person name="Garcia A."/>
            <person name="Hamilton E.J."/>
            <person name="Marassi F.M."/>
            <person name="Sweadner K.J."/>
            <person name="Cornelius F."/>
            <person name="Geering K."/>
            <person name="Rasmussen H.H."/>
        </authorList>
    </citation>
    <scope>INTERACTION WITH FXYD1</scope>
</reference>
<reference key="4">
    <citation type="journal article" date="2012" name="J. Cell Sci.">
        <title>Identification of the amino acid region involved in the intercellular interaction between the beta1 subunits of Na+/K+ -ATPase.</title>
        <authorList>
            <person name="Tokhtaeva E."/>
            <person name="Sachs G."/>
            <person name="Sun H."/>
            <person name="Dada L.A."/>
            <person name="Sznajder J.I."/>
            <person name="Vagin O."/>
        </authorList>
    </citation>
    <scope>FUNCTION IN ADHESION</scope>
</reference>
<gene>
    <name type="primary">ATP1B1</name>
</gene>
<accession>P06583</accession>
<feature type="chain" id="PRO_0000219096" description="Sodium/potassium-transporting ATPase subunit beta-1">
    <location>
        <begin position="1"/>
        <end position="303"/>
    </location>
</feature>
<feature type="topological domain" description="Cytoplasmic" evidence="5">
    <location>
        <begin position="1"/>
        <end position="34"/>
    </location>
</feature>
<feature type="transmembrane region" description="Helical; Signal-anchor for type II membrane protein" evidence="5">
    <location>
        <begin position="35"/>
        <end position="62"/>
    </location>
</feature>
<feature type="topological domain" description="Extracellular" evidence="5">
    <location>
        <begin position="63"/>
        <end position="303"/>
    </location>
</feature>
<feature type="region of interest" description="immunoglobulin-like" evidence="1">
    <location>
        <begin position="191"/>
        <end position="303"/>
    </location>
</feature>
<feature type="modified residue" description="Phosphoserine" evidence="3">
    <location>
        <position position="11"/>
    </location>
</feature>
<feature type="modified residue" description="Phosphotyrosine" evidence="4">
    <location>
        <position position="101"/>
    </location>
</feature>
<feature type="glycosylation site" description="N-linked (GlcNAc...) asparagine" evidence="8">
    <location>
        <position position="158"/>
    </location>
</feature>
<feature type="glycosylation site" description="N-linked (GlcNAc...) asparagine" evidence="8">
    <location>
        <position position="193"/>
    </location>
</feature>
<feature type="glycosylation site" description="N-linked (GlcNAc...) asparagine" evidence="8">
    <location>
        <position position="265"/>
    </location>
</feature>
<feature type="disulfide bond">
    <location>
        <begin position="126"/>
        <end position="149"/>
    </location>
</feature>
<feature type="disulfide bond" evidence="8">
    <location>
        <begin position="159"/>
        <end position="175"/>
    </location>
</feature>
<feature type="disulfide bond">
    <location>
        <begin position="213"/>
        <end position="276"/>
    </location>
</feature>
<comment type="function">
    <text evidence="2 7">This is the non-catalytic component of the active enzyme, which catalyzes the hydrolysis of ATP coupled with the exchange of Na(+) and K(+) ions across the plasma membrane. The beta subunit regulates, through assembly of alpha/beta heterodimers, the number of sodium pumps transported to the plasma membrane (PubMed:22328500). Plays a role in innate immunity by enhancing virus-triggered induction of interferons (IFNs) and interferon stimulated genes (ISGs). Mechanistically, enhances the ubiquitination of TRAF3 and TRAF6 as well as the phosphorylation of TAK1 and TBK1 (By similarity).</text>
</comment>
<comment type="function">
    <text evidence="7">Involved in cell adhesion and establishing epithelial cell polarity.</text>
</comment>
<comment type="subunit">
    <text evidence="2 3 4 6">The sodium/potassium-transporting ATPase is composed of a catalytic alpha subunit, an auxiliary non-catalytic beta subunit and an additional regulatory subunit. Interacts with catalytic subunit ATP12A (By similarity). Interacts with regulatory subunit FXYD1 (PubMed:21454534). Interacts with regulatory subunit FXYD3 (By similarity). Interacts with NKAIN1, NKAIN2 and NKAIN4 (By similarity). Interacts with MLC1. Part of a complex containing MLC1, TRPV4, AQP4 and HEPACAM. Interacts with KIRREL3 (By similarity). Interacts with OBSCN (via protein kinase domain 1) (By similarity). Interacts with TRAF3 and TRAF6 (By similarity).</text>
</comment>
<comment type="subcellular location">
    <subcellularLocation>
        <location evidence="5">Cell membrane</location>
        <topology evidence="5">Single-pass type II membrane protein</topology>
    </subcellularLocation>
    <subcellularLocation>
        <location evidence="3">Apical cell membrane</location>
        <topology evidence="5">Single-pass type II membrane protein</topology>
    </subcellularLocation>
    <subcellularLocation>
        <location evidence="4">Cell membrane</location>
        <location evidence="4">Sarcolemma</location>
    </subcellularLocation>
    <text evidence="4">Colocalizes with OBSCN at the intercalated disk and sarcolemma in cardiomyocytes. Localizes in long striations at the level of Z and M lines.</text>
</comment>
<comment type="domain">
    <text evidence="1">The C-terminal lobe folds into an immunoglobulin-like domain and mediates cell adhesion properties.</text>
</comment>
<comment type="PTM">
    <text evidence="3 4">Glutathionylated (By similarity). N-glycosylated (By similarity).</text>
</comment>
<comment type="similarity">
    <text evidence="9">Belongs to the X(+)/potassium ATPases subunit beta family.</text>
</comment>
<name>AT1B1_CANLF</name>
<proteinExistence type="evidence at protein level"/>
<protein>
    <recommendedName>
        <fullName>Sodium/potassium-transporting ATPase subunit beta-1</fullName>
    </recommendedName>
    <alternativeName>
        <fullName>Sodium/potassium-dependent ATPase subunit beta-1</fullName>
    </alternativeName>
</protein>
<evidence type="ECO:0000250" key="1"/>
<evidence type="ECO:0000250" key="2">
    <source>
        <dbReference type="UniProtKB" id="P05026"/>
    </source>
</evidence>
<evidence type="ECO:0000250" key="3">
    <source>
        <dbReference type="UniProtKB" id="P07340"/>
    </source>
</evidence>
<evidence type="ECO:0000250" key="4">
    <source>
        <dbReference type="UniProtKB" id="P14094"/>
    </source>
</evidence>
<evidence type="ECO:0000255" key="5"/>
<evidence type="ECO:0000269" key="6">
    <source>
    </source>
</evidence>
<evidence type="ECO:0000269" key="7">
    <source>
    </source>
</evidence>
<evidence type="ECO:0000269" key="8">
    <source>
    </source>
</evidence>
<evidence type="ECO:0000305" key="9"/>
<sequence>MARGKAKEEGSWKKFIWNSEKKEFLGRTGGSWFKILLFYVIFYGCLAGIFIGTIQVMLLTISEFKPTYQDRVAPPGLTQIPQIQKTEISFRPNDPKSYEEYVRNIVRFLEKYKDSAQKDEMIFEDCGNMPSEIKERGEFNNERGERKVCRFKLEWLGNCSGINDETYGYRDGKPCVLIKLNRVLGFKPKPPKNESLEAYPVMKYSPYVLPVQCTGKRDEDKDRIGNVEYFGLGGYPGFPLQYYPYYGKLLQPKYLQPLLAVQFTNLTMDTEIRIECKAYGENIGYSEKDRFQGRFDVKIEVKS</sequence>
<keyword id="KW-0130">Cell adhesion</keyword>
<keyword id="KW-1003">Cell membrane</keyword>
<keyword id="KW-0903">Direct protein sequencing</keyword>
<keyword id="KW-1015">Disulfide bond</keyword>
<keyword id="KW-0318">Glutathionylation</keyword>
<keyword id="KW-0325">Glycoprotein</keyword>
<keyword id="KW-0391">Immunity</keyword>
<keyword id="KW-0399">Innate immunity</keyword>
<keyword id="KW-0406">Ion transport</keyword>
<keyword id="KW-0472">Membrane</keyword>
<keyword id="KW-0597">Phosphoprotein</keyword>
<keyword id="KW-0630">Potassium</keyword>
<keyword id="KW-0633">Potassium transport</keyword>
<keyword id="KW-1185">Reference proteome</keyword>
<keyword id="KW-0735">Signal-anchor</keyword>
<keyword id="KW-0915">Sodium</keyword>
<keyword id="KW-0739">Sodium transport</keyword>
<keyword id="KW-0740">Sodium/potassium transport</keyword>
<keyword id="KW-0812">Transmembrane</keyword>
<keyword id="KW-1133">Transmembrane helix</keyword>
<keyword id="KW-0813">Transport</keyword>